<organism>
    <name type="scientific">Brucella suis (strain ATCC 23445 / NCTC 10510)</name>
    <dbReference type="NCBI Taxonomy" id="470137"/>
    <lineage>
        <taxon>Bacteria</taxon>
        <taxon>Pseudomonadati</taxon>
        <taxon>Pseudomonadota</taxon>
        <taxon>Alphaproteobacteria</taxon>
        <taxon>Hyphomicrobiales</taxon>
        <taxon>Brucellaceae</taxon>
        <taxon>Brucella/Ochrobactrum group</taxon>
        <taxon>Brucella</taxon>
    </lineage>
</organism>
<accession>B0CJI0</accession>
<gene>
    <name evidence="1" type="primary">hslV</name>
    <name type="ordered locus">BSUIS_A1921</name>
</gene>
<evidence type="ECO:0000255" key="1">
    <source>
        <dbReference type="HAMAP-Rule" id="MF_00248"/>
    </source>
</evidence>
<dbReference type="EC" id="3.4.25.2" evidence="1"/>
<dbReference type="EMBL" id="CP000911">
    <property type="protein sequence ID" value="ABY38932.1"/>
    <property type="molecule type" value="Genomic_DNA"/>
</dbReference>
<dbReference type="RefSeq" id="WP_002965144.1">
    <property type="nucleotide sequence ID" value="NC_010169.1"/>
</dbReference>
<dbReference type="SMR" id="B0CJI0"/>
<dbReference type="MEROPS" id="T01.006"/>
<dbReference type="GeneID" id="55591650"/>
<dbReference type="KEGG" id="bmt:BSUIS_A1921"/>
<dbReference type="HOGENOM" id="CLU_093872_1_0_5"/>
<dbReference type="Proteomes" id="UP000008545">
    <property type="component" value="Chromosome I"/>
</dbReference>
<dbReference type="GO" id="GO:0009376">
    <property type="term" value="C:HslUV protease complex"/>
    <property type="evidence" value="ECO:0007669"/>
    <property type="project" value="UniProtKB-UniRule"/>
</dbReference>
<dbReference type="GO" id="GO:0005839">
    <property type="term" value="C:proteasome core complex"/>
    <property type="evidence" value="ECO:0007669"/>
    <property type="project" value="InterPro"/>
</dbReference>
<dbReference type="GO" id="GO:0046872">
    <property type="term" value="F:metal ion binding"/>
    <property type="evidence" value="ECO:0007669"/>
    <property type="project" value="UniProtKB-KW"/>
</dbReference>
<dbReference type="GO" id="GO:0004298">
    <property type="term" value="F:threonine-type endopeptidase activity"/>
    <property type="evidence" value="ECO:0007669"/>
    <property type="project" value="UniProtKB-KW"/>
</dbReference>
<dbReference type="GO" id="GO:0051603">
    <property type="term" value="P:proteolysis involved in protein catabolic process"/>
    <property type="evidence" value="ECO:0007669"/>
    <property type="project" value="InterPro"/>
</dbReference>
<dbReference type="CDD" id="cd01913">
    <property type="entry name" value="protease_HslV"/>
    <property type="match status" value="1"/>
</dbReference>
<dbReference type="FunFam" id="3.60.20.10:FF:000002">
    <property type="entry name" value="ATP-dependent protease subunit HslV"/>
    <property type="match status" value="1"/>
</dbReference>
<dbReference type="Gene3D" id="3.60.20.10">
    <property type="entry name" value="Glutamine Phosphoribosylpyrophosphate, subunit 1, domain 1"/>
    <property type="match status" value="1"/>
</dbReference>
<dbReference type="HAMAP" id="MF_00248">
    <property type="entry name" value="HslV"/>
    <property type="match status" value="1"/>
</dbReference>
<dbReference type="InterPro" id="IPR022281">
    <property type="entry name" value="ATP-dep_Prtase_HsIV_su"/>
</dbReference>
<dbReference type="InterPro" id="IPR029055">
    <property type="entry name" value="Ntn_hydrolases_N"/>
</dbReference>
<dbReference type="InterPro" id="IPR001353">
    <property type="entry name" value="Proteasome_sua/b"/>
</dbReference>
<dbReference type="InterPro" id="IPR023333">
    <property type="entry name" value="Proteasome_suB-type"/>
</dbReference>
<dbReference type="NCBIfam" id="TIGR03692">
    <property type="entry name" value="ATP_dep_HslV"/>
    <property type="match status" value="1"/>
</dbReference>
<dbReference type="NCBIfam" id="NF003964">
    <property type="entry name" value="PRK05456.1"/>
    <property type="match status" value="1"/>
</dbReference>
<dbReference type="PANTHER" id="PTHR32194:SF7">
    <property type="entry name" value="ATP-DEPENDENT PROTEASE SUBUNIT HSLV"/>
    <property type="match status" value="1"/>
</dbReference>
<dbReference type="PANTHER" id="PTHR32194">
    <property type="entry name" value="METALLOPROTEASE TLDD"/>
    <property type="match status" value="1"/>
</dbReference>
<dbReference type="Pfam" id="PF00227">
    <property type="entry name" value="Proteasome"/>
    <property type="match status" value="1"/>
</dbReference>
<dbReference type="PIRSF" id="PIRSF039093">
    <property type="entry name" value="HslV"/>
    <property type="match status" value="1"/>
</dbReference>
<dbReference type="SUPFAM" id="SSF56235">
    <property type="entry name" value="N-terminal nucleophile aminohydrolases (Ntn hydrolases)"/>
    <property type="match status" value="1"/>
</dbReference>
<dbReference type="PROSITE" id="PS51476">
    <property type="entry name" value="PROTEASOME_BETA_2"/>
    <property type="match status" value="1"/>
</dbReference>
<sequence>MIEHNPTTIYGTTIVTVRKDGKVVIAGDGQVSLGNTVMKGNARKVRRIGKGNVIAGFAGATADAFTLLERLEAKLEQYPDQLMRASVELAKDWRTDRYLRKLEAMMLVADSKVTLALTGTGDVLEPEQGVMAIGSGGNYALAAARALIETDKSAEEIARKAMNIAADICIYTNHNIIVESLDAQ</sequence>
<proteinExistence type="inferred from homology"/>
<comment type="function">
    <text evidence="1">Protease subunit of a proteasome-like degradation complex believed to be a general protein degrading machinery.</text>
</comment>
<comment type="catalytic activity">
    <reaction evidence="1">
        <text>ATP-dependent cleavage of peptide bonds with broad specificity.</text>
        <dbReference type="EC" id="3.4.25.2"/>
    </reaction>
</comment>
<comment type="activity regulation">
    <text evidence="1">Allosterically activated by HslU binding.</text>
</comment>
<comment type="subunit">
    <text evidence="1">A double ring-shaped homohexamer of HslV is capped on each side by a ring-shaped HslU homohexamer. The assembly of the HslU/HslV complex is dependent on binding of ATP.</text>
</comment>
<comment type="subcellular location">
    <subcellularLocation>
        <location evidence="1">Cytoplasm</location>
    </subcellularLocation>
</comment>
<comment type="similarity">
    <text evidence="1">Belongs to the peptidase T1B family. HslV subfamily.</text>
</comment>
<name>HSLV_BRUSI</name>
<reference key="1">
    <citation type="submission" date="2007-12" db="EMBL/GenBank/DDBJ databases">
        <title>Brucella suis ATCC 23445 whole genome shotgun sequencing project.</title>
        <authorList>
            <person name="Setubal J.C."/>
            <person name="Bowns C."/>
            <person name="Boyle S."/>
            <person name="Crasta O.R."/>
            <person name="Czar M.J."/>
            <person name="Dharmanolla C."/>
            <person name="Gillespie J.J."/>
            <person name="Kenyon R.W."/>
            <person name="Lu J."/>
            <person name="Mane S."/>
            <person name="Mohapatra S."/>
            <person name="Nagrani S."/>
            <person name="Purkayastha A."/>
            <person name="Rajasimha H.K."/>
            <person name="Shallom J.M."/>
            <person name="Shallom S."/>
            <person name="Shukla M."/>
            <person name="Snyder E.E."/>
            <person name="Sobral B.W."/>
            <person name="Wattam A.R."/>
            <person name="Will R."/>
            <person name="Williams K."/>
            <person name="Yoo H."/>
            <person name="Bruce D."/>
            <person name="Detter C."/>
            <person name="Munk C."/>
            <person name="Brettin T.S."/>
        </authorList>
    </citation>
    <scope>NUCLEOTIDE SEQUENCE [LARGE SCALE GENOMIC DNA]</scope>
    <source>
        <strain>ATCC 23445 / NCTC 10510</strain>
    </source>
</reference>
<protein>
    <recommendedName>
        <fullName evidence="1">ATP-dependent protease subunit HslV</fullName>
        <ecNumber evidence="1">3.4.25.2</ecNumber>
    </recommendedName>
</protein>
<feature type="chain" id="PRO_1000078417" description="ATP-dependent protease subunit HslV">
    <location>
        <begin position="1"/>
        <end position="184"/>
    </location>
</feature>
<feature type="active site" evidence="1">
    <location>
        <position position="12"/>
    </location>
</feature>
<feature type="binding site" evidence="1">
    <location>
        <position position="166"/>
    </location>
    <ligand>
        <name>Na(+)</name>
        <dbReference type="ChEBI" id="CHEBI:29101"/>
    </ligand>
</feature>
<feature type="binding site" evidence="1">
    <location>
        <position position="169"/>
    </location>
    <ligand>
        <name>Na(+)</name>
        <dbReference type="ChEBI" id="CHEBI:29101"/>
    </ligand>
</feature>
<feature type="binding site" evidence="1">
    <location>
        <position position="172"/>
    </location>
    <ligand>
        <name>Na(+)</name>
        <dbReference type="ChEBI" id="CHEBI:29101"/>
    </ligand>
</feature>
<keyword id="KW-0021">Allosteric enzyme</keyword>
<keyword id="KW-0963">Cytoplasm</keyword>
<keyword id="KW-0378">Hydrolase</keyword>
<keyword id="KW-0479">Metal-binding</keyword>
<keyword id="KW-0645">Protease</keyword>
<keyword id="KW-0915">Sodium</keyword>
<keyword id="KW-0888">Threonine protease</keyword>